<reference key="1">
    <citation type="submission" date="2007-05" db="EMBL/GenBank/DDBJ databases">
        <title>Complete sequence of Pseudomonas putida F1.</title>
        <authorList>
            <consortium name="US DOE Joint Genome Institute"/>
            <person name="Copeland A."/>
            <person name="Lucas S."/>
            <person name="Lapidus A."/>
            <person name="Barry K."/>
            <person name="Detter J.C."/>
            <person name="Glavina del Rio T."/>
            <person name="Hammon N."/>
            <person name="Israni S."/>
            <person name="Dalin E."/>
            <person name="Tice H."/>
            <person name="Pitluck S."/>
            <person name="Chain P."/>
            <person name="Malfatti S."/>
            <person name="Shin M."/>
            <person name="Vergez L."/>
            <person name="Schmutz J."/>
            <person name="Larimer F."/>
            <person name="Land M."/>
            <person name="Hauser L."/>
            <person name="Kyrpides N."/>
            <person name="Lykidis A."/>
            <person name="Parales R."/>
            <person name="Richardson P."/>
        </authorList>
    </citation>
    <scope>NUCLEOTIDE SEQUENCE [LARGE SCALE GENOMIC DNA]</scope>
    <source>
        <strain>ATCC 700007 / DSM 6899 / JCM 31910 / BCRC 17059 / LMG 24140 / F1</strain>
    </source>
</reference>
<comment type="catalytic activity">
    <reaction evidence="1">
        <text>1-(5-phospho-beta-D-ribosyl)-ATP + H2O = 1-(5-phospho-beta-D-ribosyl)-5'-AMP + diphosphate + H(+)</text>
        <dbReference type="Rhea" id="RHEA:22828"/>
        <dbReference type="ChEBI" id="CHEBI:15377"/>
        <dbReference type="ChEBI" id="CHEBI:15378"/>
        <dbReference type="ChEBI" id="CHEBI:33019"/>
        <dbReference type="ChEBI" id="CHEBI:59457"/>
        <dbReference type="ChEBI" id="CHEBI:73183"/>
        <dbReference type="EC" id="3.6.1.31"/>
    </reaction>
</comment>
<comment type="pathway">
    <text evidence="1">Amino-acid biosynthesis; L-histidine biosynthesis; L-histidine from 5-phospho-alpha-D-ribose 1-diphosphate: step 2/9.</text>
</comment>
<comment type="subcellular location">
    <subcellularLocation>
        <location evidence="1">Cytoplasm</location>
    </subcellularLocation>
</comment>
<comment type="similarity">
    <text evidence="1">Belongs to the PRA-PH family.</text>
</comment>
<gene>
    <name evidence="1" type="primary">hisE</name>
    <name type="ordered locus">Pput_4889</name>
</gene>
<name>HIS2_PSEP1</name>
<evidence type="ECO:0000255" key="1">
    <source>
        <dbReference type="HAMAP-Rule" id="MF_01020"/>
    </source>
</evidence>
<sequence>MSDTLNRLAEVLEERKQAAPDSSYVASLYHKGLNKILEKLGEESVETIIAAKDAQISKDYSDVIYETADLWFHSLVMLSALGQHPQAVLDELERRFGLSGHDEKAARQPSA</sequence>
<protein>
    <recommendedName>
        <fullName evidence="1">Phosphoribosyl-ATP pyrophosphatase</fullName>
        <shortName evidence="1">PRA-PH</shortName>
        <ecNumber evidence="1">3.6.1.31</ecNumber>
    </recommendedName>
</protein>
<accession>A5WA49</accession>
<feature type="chain" id="PRO_1000063372" description="Phosphoribosyl-ATP pyrophosphatase">
    <location>
        <begin position="1"/>
        <end position="111"/>
    </location>
</feature>
<keyword id="KW-0028">Amino-acid biosynthesis</keyword>
<keyword id="KW-0067">ATP-binding</keyword>
<keyword id="KW-0963">Cytoplasm</keyword>
<keyword id="KW-0368">Histidine biosynthesis</keyword>
<keyword id="KW-0378">Hydrolase</keyword>
<keyword id="KW-0547">Nucleotide-binding</keyword>
<dbReference type="EC" id="3.6.1.31" evidence="1"/>
<dbReference type="EMBL" id="CP000712">
    <property type="protein sequence ID" value="ABQ81009.1"/>
    <property type="molecule type" value="Genomic_DNA"/>
</dbReference>
<dbReference type="SMR" id="A5WA49"/>
<dbReference type="KEGG" id="ppf:Pput_4889"/>
<dbReference type="eggNOG" id="COG0140">
    <property type="taxonomic scope" value="Bacteria"/>
</dbReference>
<dbReference type="HOGENOM" id="CLU_123337_1_2_6"/>
<dbReference type="UniPathway" id="UPA00031">
    <property type="reaction ID" value="UER00007"/>
</dbReference>
<dbReference type="GO" id="GO:0005737">
    <property type="term" value="C:cytoplasm"/>
    <property type="evidence" value="ECO:0007669"/>
    <property type="project" value="UniProtKB-SubCell"/>
</dbReference>
<dbReference type="GO" id="GO:0005524">
    <property type="term" value="F:ATP binding"/>
    <property type="evidence" value="ECO:0007669"/>
    <property type="project" value="UniProtKB-KW"/>
</dbReference>
<dbReference type="GO" id="GO:0004636">
    <property type="term" value="F:phosphoribosyl-ATP diphosphatase activity"/>
    <property type="evidence" value="ECO:0007669"/>
    <property type="project" value="UniProtKB-UniRule"/>
</dbReference>
<dbReference type="GO" id="GO:0000105">
    <property type="term" value="P:L-histidine biosynthetic process"/>
    <property type="evidence" value="ECO:0007669"/>
    <property type="project" value="UniProtKB-UniRule"/>
</dbReference>
<dbReference type="CDD" id="cd11534">
    <property type="entry name" value="NTP-PPase_HisIE_like"/>
    <property type="match status" value="1"/>
</dbReference>
<dbReference type="Gene3D" id="1.10.287.1080">
    <property type="entry name" value="MazG-like"/>
    <property type="match status" value="1"/>
</dbReference>
<dbReference type="HAMAP" id="MF_01020">
    <property type="entry name" value="HisE"/>
    <property type="match status" value="1"/>
</dbReference>
<dbReference type="InterPro" id="IPR008179">
    <property type="entry name" value="HisE"/>
</dbReference>
<dbReference type="InterPro" id="IPR021130">
    <property type="entry name" value="PRib-ATP_PPHydrolase-like"/>
</dbReference>
<dbReference type="NCBIfam" id="TIGR03188">
    <property type="entry name" value="histidine_hisI"/>
    <property type="match status" value="1"/>
</dbReference>
<dbReference type="NCBIfam" id="NF001611">
    <property type="entry name" value="PRK00400.1-3"/>
    <property type="match status" value="1"/>
</dbReference>
<dbReference type="PANTHER" id="PTHR42945">
    <property type="entry name" value="HISTIDINE BIOSYNTHESIS BIFUNCTIONAL PROTEIN"/>
    <property type="match status" value="1"/>
</dbReference>
<dbReference type="PANTHER" id="PTHR42945:SF9">
    <property type="entry name" value="HISTIDINE BIOSYNTHESIS BIFUNCTIONAL PROTEIN HISIE"/>
    <property type="match status" value="1"/>
</dbReference>
<dbReference type="Pfam" id="PF01503">
    <property type="entry name" value="PRA-PH"/>
    <property type="match status" value="1"/>
</dbReference>
<dbReference type="SUPFAM" id="SSF101386">
    <property type="entry name" value="all-alpha NTP pyrophosphatases"/>
    <property type="match status" value="1"/>
</dbReference>
<proteinExistence type="inferred from homology"/>
<organism>
    <name type="scientific">Pseudomonas putida (strain ATCC 700007 / DSM 6899 / JCM 31910 / BCRC 17059 / LMG 24140 / F1)</name>
    <dbReference type="NCBI Taxonomy" id="351746"/>
    <lineage>
        <taxon>Bacteria</taxon>
        <taxon>Pseudomonadati</taxon>
        <taxon>Pseudomonadota</taxon>
        <taxon>Gammaproteobacteria</taxon>
        <taxon>Pseudomonadales</taxon>
        <taxon>Pseudomonadaceae</taxon>
        <taxon>Pseudomonas</taxon>
    </lineage>
</organism>